<organism>
    <name type="scientific">Arabidopsis thaliana</name>
    <name type="common">Mouse-ear cress</name>
    <dbReference type="NCBI Taxonomy" id="3702"/>
    <lineage>
        <taxon>Eukaryota</taxon>
        <taxon>Viridiplantae</taxon>
        <taxon>Streptophyta</taxon>
        <taxon>Embryophyta</taxon>
        <taxon>Tracheophyta</taxon>
        <taxon>Spermatophyta</taxon>
        <taxon>Magnoliopsida</taxon>
        <taxon>eudicotyledons</taxon>
        <taxon>Gunneridae</taxon>
        <taxon>Pentapetalae</taxon>
        <taxon>rosids</taxon>
        <taxon>malvids</taxon>
        <taxon>Brassicales</taxon>
        <taxon>Brassicaceae</taxon>
        <taxon>Camelineae</taxon>
        <taxon>Arabidopsis</taxon>
    </lineage>
</organism>
<comment type="function">
    <text evidence="1">Heterogeneous nuclear ribonucleoprotein (hnRNP)-like protein that acts as a component of the pre-mRNA processing machinery. Functions to facilitate the nuclear maturation of plant pre-mRNAs (By similarity).</text>
</comment>
<comment type="subunit">
    <text evidence="4">Interacts with UBA1A and UBA2A.</text>
</comment>
<comment type="interaction">
    <interactant intactId="EBI-346277">
        <id>Q9LQI9</id>
    </interactant>
    <interactant intactId="EBI-346271">
        <id>Q9SHZ6</id>
        <label>UBA1A</label>
    </interactant>
    <organismsDiffer>false</organismsDiffer>
    <experiments>2</experiments>
</comment>
<comment type="subcellular location">
    <subcellularLocation>
        <location evidence="1">Nucleus</location>
    </subcellularLocation>
</comment>
<comment type="alternative products">
    <event type="alternative splicing"/>
    <isoform>
        <id>Q9LQI9-1</id>
        <name>1</name>
        <sequence type="displayed"/>
    </isoform>
    <text>A number of isoforms are produced. According to EST sequences.</text>
</comment>
<comment type="sequence caution" evidence="5">
    <conflict type="erroneous gene model prediction">
        <sequence resource="EMBL-CDS" id="AAF79492"/>
    </conflict>
</comment>
<name>UBP1B_ARATH</name>
<gene>
    <name type="primary">UBP1B</name>
    <name type="ordered locus">At1g17370</name>
    <name type="ORF">F1L3.2</name>
    <name type="ORF">F28G4.17</name>
</gene>
<reference key="1">
    <citation type="journal article" date="2000" name="Nature">
        <title>Sequence and analysis of chromosome 1 of the plant Arabidopsis thaliana.</title>
        <authorList>
            <person name="Theologis A."/>
            <person name="Ecker J.R."/>
            <person name="Palm C.J."/>
            <person name="Federspiel N.A."/>
            <person name="Kaul S."/>
            <person name="White O."/>
            <person name="Alonso J."/>
            <person name="Altafi H."/>
            <person name="Araujo R."/>
            <person name="Bowman C.L."/>
            <person name="Brooks S.Y."/>
            <person name="Buehler E."/>
            <person name="Chan A."/>
            <person name="Chao Q."/>
            <person name="Chen H."/>
            <person name="Cheuk R.F."/>
            <person name="Chin C.W."/>
            <person name="Chung M.K."/>
            <person name="Conn L."/>
            <person name="Conway A.B."/>
            <person name="Conway A.R."/>
            <person name="Creasy T.H."/>
            <person name="Dewar K."/>
            <person name="Dunn P."/>
            <person name="Etgu P."/>
            <person name="Feldblyum T.V."/>
            <person name="Feng J.-D."/>
            <person name="Fong B."/>
            <person name="Fujii C.Y."/>
            <person name="Gill J.E."/>
            <person name="Goldsmith A.D."/>
            <person name="Haas B."/>
            <person name="Hansen N.F."/>
            <person name="Hughes B."/>
            <person name="Huizar L."/>
            <person name="Hunter J.L."/>
            <person name="Jenkins J."/>
            <person name="Johnson-Hopson C."/>
            <person name="Khan S."/>
            <person name="Khaykin E."/>
            <person name="Kim C.J."/>
            <person name="Koo H.L."/>
            <person name="Kremenetskaia I."/>
            <person name="Kurtz D.B."/>
            <person name="Kwan A."/>
            <person name="Lam B."/>
            <person name="Langin-Hooper S."/>
            <person name="Lee A."/>
            <person name="Lee J.M."/>
            <person name="Lenz C.A."/>
            <person name="Li J.H."/>
            <person name="Li Y.-P."/>
            <person name="Lin X."/>
            <person name="Liu S.X."/>
            <person name="Liu Z.A."/>
            <person name="Luros J.S."/>
            <person name="Maiti R."/>
            <person name="Marziali A."/>
            <person name="Militscher J."/>
            <person name="Miranda M."/>
            <person name="Nguyen M."/>
            <person name="Nierman W.C."/>
            <person name="Osborne B.I."/>
            <person name="Pai G."/>
            <person name="Peterson J."/>
            <person name="Pham P.K."/>
            <person name="Rizzo M."/>
            <person name="Rooney T."/>
            <person name="Rowley D."/>
            <person name="Sakano H."/>
            <person name="Salzberg S.L."/>
            <person name="Schwartz J.R."/>
            <person name="Shinn P."/>
            <person name="Southwick A.M."/>
            <person name="Sun H."/>
            <person name="Tallon L.J."/>
            <person name="Tambunga G."/>
            <person name="Toriumi M.J."/>
            <person name="Town C.D."/>
            <person name="Utterback T."/>
            <person name="Van Aken S."/>
            <person name="Vaysberg M."/>
            <person name="Vysotskaia V.S."/>
            <person name="Walker M."/>
            <person name="Wu D."/>
            <person name="Yu G."/>
            <person name="Fraser C.M."/>
            <person name="Venter J.C."/>
            <person name="Davis R.W."/>
        </authorList>
    </citation>
    <scope>NUCLEOTIDE SEQUENCE [LARGE SCALE GENOMIC DNA]</scope>
    <source>
        <strain>cv. Columbia</strain>
    </source>
</reference>
<reference key="2">
    <citation type="journal article" date="2017" name="Plant J.">
        <title>Araport11: a complete reannotation of the Arabidopsis thaliana reference genome.</title>
        <authorList>
            <person name="Cheng C.Y."/>
            <person name="Krishnakumar V."/>
            <person name="Chan A.P."/>
            <person name="Thibaud-Nissen F."/>
            <person name="Schobel S."/>
            <person name="Town C.D."/>
        </authorList>
    </citation>
    <scope>GENOME REANNOTATION</scope>
    <source>
        <strain>cv. Columbia</strain>
    </source>
</reference>
<reference key="3">
    <citation type="submission" date="2006-08" db="EMBL/GenBank/DDBJ databases">
        <title>Arabidopsis ORF Clones.</title>
        <authorList>
            <person name="Quinitio C."/>
            <person name="Chen H."/>
            <person name="Kim C.J."/>
            <person name="Shinn P."/>
            <person name="Ecker J.R."/>
        </authorList>
    </citation>
    <scope>NUCLEOTIDE SEQUENCE [LARGE SCALE MRNA]</scope>
    <source>
        <strain>cv. Columbia</strain>
    </source>
</reference>
<reference key="4">
    <citation type="submission" date="2002-03" db="EMBL/GenBank/DDBJ databases">
        <title>Full-length cDNA from Arabidopsis thaliana.</title>
        <authorList>
            <person name="Brover V.V."/>
            <person name="Troukhan M.E."/>
            <person name="Alexandrov N.A."/>
            <person name="Lu Y.-P."/>
            <person name="Flavell R.B."/>
            <person name="Feldmann K.A."/>
        </authorList>
    </citation>
    <scope>NUCLEOTIDE SEQUENCE [LARGE SCALE MRNA]</scope>
</reference>
<reference key="5">
    <citation type="journal article" date="2002" name="Mol. Cell. Biol.">
        <title>UBA1 and UBA2, two proteins that interact with UBP1, a multifunctional effector of pre-mRNA maturation in plants.</title>
        <authorList>
            <person name="Lambermon M.H."/>
            <person name="Fu Y."/>
            <person name="Wieczorek Kirk D.A."/>
            <person name="Dupasquier M."/>
            <person name="Filipowicz W."/>
            <person name="Lorkovic Z.J."/>
        </authorList>
    </citation>
    <scope>INTERACTION WITH UBA1A AND UBA2A</scope>
</reference>
<reference key="6">
    <citation type="journal article" date="2009" name="Plant Physiol.">
        <title>Large-scale Arabidopsis phosphoproteome profiling reveals novel chloroplast kinase substrates and phosphorylation networks.</title>
        <authorList>
            <person name="Reiland S."/>
            <person name="Messerli G."/>
            <person name="Baerenfaller K."/>
            <person name="Gerrits B."/>
            <person name="Endler A."/>
            <person name="Grossmann J."/>
            <person name="Gruissem W."/>
            <person name="Baginsky S."/>
        </authorList>
    </citation>
    <scope>PHOSPHORYLATION [LARGE SCALE ANALYSIS] AT SER-241</scope>
    <scope>IDENTIFICATION BY MASS SPECTROMETRY [LARGE SCALE ANALYSIS]</scope>
</reference>
<keyword id="KW-0025">Alternative splicing</keyword>
<keyword id="KW-0507">mRNA processing</keyword>
<keyword id="KW-0539">Nucleus</keyword>
<keyword id="KW-0597">Phosphoprotein</keyword>
<keyword id="KW-1185">Reference proteome</keyword>
<keyword id="KW-0677">Repeat</keyword>
<keyword id="KW-0694">RNA-binding</keyword>
<accession>Q9LQI9</accession>
<accession>Q9LNS1</accession>
<protein>
    <recommendedName>
        <fullName>Oligouridylate-binding protein 1B</fullName>
        <shortName>AtUBP1b</shortName>
    </recommendedName>
    <alternativeName>
        <fullName>Polyuridylate-binding protein UBP1B</fullName>
        <shortName>Poly(U)-binding protein UBP1B</shortName>
    </alternativeName>
</protein>
<proteinExistence type="evidence at protein level"/>
<feature type="chain" id="PRO_0000425435" description="Oligouridylate-binding protein 1B">
    <location>
        <begin position="1"/>
        <end position="419"/>
    </location>
</feature>
<feature type="domain" description="RRM 1" evidence="2">
    <location>
        <begin position="54"/>
        <end position="128"/>
    </location>
</feature>
<feature type="domain" description="RRM 2" evidence="2">
    <location>
        <begin position="139"/>
        <end position="217"/>
    </location>
</feature>
<feature type="domain" description="RRM 3" evidence="2">
    <location>
        <begin position="260"/>
        <end position="335"/>
    </location>
</feature>
<feature type="region of interest" description="Disordered" evidence="3">
    <location>
        <begin position="217"/>
        <end position="257"/>
    </location>
</feature>
<feature type="modified residue" description="Phosphoserine" evidence="6">
    <location>
        <position position="241"/>
    </location>
</feature>
<evidence type="ECO:0000250" key="1"/>
<evidence type="ECO:0000255" key="2">
    <source>
        <dbReference type="PROSITE-ProRule" id="PRU00176"/>
    </source>
</evidence>
<evidence type="ECO:0000256" key="3">
    <source>
        <dbReference type="SAM" id="MobiDB-lite"/>
    </source>
</evidence>
<evidence type="ECO:0000269" key="4">
    <source>
    </source>
</evidence>
<evidence type="ECO:0000305" key="5"/>
<evidence type="ECO:0007744" key="6">
    <source>
    </source>
</evidence>
<sequence length="419" mass="46049">MQRLKQQQQQQQVMMQQALMQQQSLYHPGLLAPPQIEPIPSGNLPPGFDPSTCRSVYVGNIHIQVTEPLLQEVFAGTGPVESCKLIRKEKSSYGFVHYFDRRSAGLAILSLNGRHLFGQPIKVNWAYASGQREDTSSHFNIFVGDLSPEVTDAMLFTCFSVYPTCSDARVMWDQKTGRSRGFGFVSFRNQQDAQTAIDEITGKWLGSRQIRCNWATKGATSGEDKQSSDSKSVVELTSGVSEDGKDTTNGEAPENNAQYTTVYVGNLAPEVSQVDLHRHFHSLGAGVIEEVRVQRDKGFGFVRYSTHVEAALAIQMGNTHSYLSGRQMKCSWGSKPTPAGTASNPLPPPAPAPIPGFSASDLLAYERQLAMSKMAGMNPMMHHPQGQHAFKQAAMGATGSNQAIYDGGYQNAQQLMYYQ</sequence>
<dbReference type="EMBL" id="AC007843">
    <property type="protein sequence ID" value="AAF97318.1"/>
    <property type="molecule type" value="Genomic_DNA"/>
</dbReference>
<dbReference type="EMBL" id="AC022492">
    <property type="protein sequence ID" value="AAF79492.1"/>
    <property type="status" value="ALT_SEQ"/>
    <property type="molecule type" value="Genomic_DNA"/>
</dbReference>
<dbReference type="EMBL" id="CP002684">
    <property type="protein sequence ID" value="AEE29579.1"/>
    <property type="molecule type" value="Genomic_DNA"/>
</dbReference>
<dbReference type="EMBL" id="BT026477">
    <property type="protein sequence ID" value="ABH04584.1"/>
    <property type="molecule type" value="mRNA"/>
</dbReference>
<dbReference type="EMBL" id="AY085705">
    <property type="protein sequence ID" value="AAM62923.1"/>
    <property type="molecule type" value="mRNA"/>
</dbReference>
<dbReference type="PIR" id="C86310">
    <property type="entry name" value="C86310"/>
</dbReference>
<dbReference type="RefSeq" id="NP_564018.1">
    <molecule id="Q9LQI9-1"/>
    <property type="nucleotide sequence ID" value="NM_101598.3"/>
</dbReference>
<dbReference type="SMR" id="Q9LQI9"/>
<dbReference type="BioGRID" id="23549">
    <property type="interactions" value="1"/>
</dbReference>
<dbReference type="FunCoup" id="Q9LQI9">
    <property type="interactions" value="3503"/>
</dbReference>
<dbReference type="IntAct" id="Q9LQI9">
    <property type="interactions" value="2"/>
</dbReference>
<dbReference type="STRING" id="3702.Q9LQI9"/>
<dbReference type="GlyGen" id="Q9LQI9">
    <property type="glycosylation" value="1 site"/>
</dbReference>
<dbReference type="iPTMnet" id="Q9LQI9"/>
<dbReference type="PaxDb" id="3702-AT1G17370.1"/>
<dbReference type="ProteomicsDB" id="233062">
    <molecule id="Q9LQI9-1"/>
</dbReference>
<dbReference type="EnsemblPlants" id="AT1G17370.1">
    <molecule id="Q9LQI9-1"/>
    <property type="protein sequence ID" value="AT1G17370.1"/>
    <property type="gene ID" value="AT1G17370"/>
</dbReference>
<dbReference type="GeneID" id="838309"/>
<dbReference type="Gramene" id="AT1G17370.1">
    <molecule id="Q9LQI9-1"/>
    <property type="protein sequence ID" value="AT1G17370.1"/>
    <property type="gene ID" value="AT1G17370"/>
</dbReference>
<dbReference type="KEGG" id="ath:AT1G17370"/>
<dbReference type="Araport" id="AT1G17370"/>
<dbReference type="TAIR" id="AT1G17370">
    <property type="gene designation" value="UBP1B"/>
</dbReference>
<dbReference type="eggNOG" id="KOG0118">
    <property type="taxonomic scope" value="Eukaryota"/>
</dbReference>
<dbReference type="InParanoid" id="Q9LQI9"/>
<dbReference type="OMA" id="NEIRVNW"/>
<dbReference type="OrthoDB" id="8093034at2759"/>
<dbReference type="PhylomeDB" id="Q9LQI9"/>
<dbReference type="PRO" id="PR:Q9LQI9"/>
<dbReference type="Proteomes" id="UP000006548">
    <property type="component" value="Chromosome 1"/>
</dbReference>
<dbReference type="ExpressionAtlas" id="Q9LQI9">
    <property type="expression patterns" value="baseline and differential"/>
</dbReference>
<dbReference type="GO" id="GO:0005634">
    <property type="term" value="C:nucleus"/>
    <property type="evidence" value="ECO:0007669"/>
    <property type="project" value="UniProtKB-SubCell"/>
</dbReference>
<dbReference type="GO" id="GO:0003729">
    <property type="term" value="F:mRNA binding"/>
    <property type="evidence" value="ECO:0000314"/>
    <property type="project" value="TAIR"/>
</dbReference>
<dbReference type="GO" id="GO:0006397">
    <property type="term" value="P:mRNA processing"/>
    <property type="evidence" value="ECO:0007669"/>
    <property type="project" value="UniProtKB-KW"/>
</dbReference>
<dbReference type="CDD" id="cd12614">
    <property type="entry name" value="RRM1_PUB1"/>
    <property type="match status" value="1"/>
</dbReference>
<dbReference type="CDD" id="cd12619">
    <property type="entry name" value="RRM2_PUB1"/>
    <property type="match status" value="1"/>
</dbReference>
<dbReference type="CDD" id="cd12622">
    <property type="entry name" value="RRM3_PUB1"/>
    <property type="match status" value="1"/>
</dbReference>
<dbReference type="FunFam" id="3.30.70.330:FF:000256">
    <property type="entry name" value="oligouridylate-binding protein 1-like isoform X2"/>
    <property type="match status" value="1"/>
</dbReference>
<dbReference type="FunFam" id="3.30.70.330:FF:000275">
    <property type="entry name" value="oligouridylate-binding protein 1B-like isoform X2"/>
    <property type="match status" value="1"/>
</dbReference>
<dbReference type="FunFam" id="3.30.70.330:FF:000191">
    <property type="entry name" value="Oligouridylate-binding protein 1C"/>
    <property type="match status" value="1"/>
</dbReference>
<dbReference type="Gene3D" id="3.30.70.330">
    <property type="match status" value="3"/>
</dbReference>
<dbReference type="InterPro" id="IPR012677">
    <property type="entry name" value="Nucleotide-bd_a/b_plait_sf"/>
</dbReference>
<dbReference type="InterPro" id="IPR035979">
    <property type="entry name" value="RBD_domain_sf"/>
</dbReference>
<dbReference type="InterPro" id="IPR050825">
    <property type="entry name" value="RBM42_RBP45_47-like"/>
</dbReference>
<dbReference type="InterPro" id="IPR000504">
    <property type="entry name" value="RRM_dom"/>
</dbReference>
<dbReference type="PANTHER" id="PTHR47640:SF9">
    <property type="entry name" value="POLYADENYLATE-BINDING PROTEIN RBP47B"/>
    <property type="match status" value="1"/>
</dbReference>
<dbReference type="PANTHER" id="PTHR47640">
    <property type="entry name" value="TRNA SELENOCYSTEINE 1-ASSOCIATED PROTEIN 1-RELATED-RELATED"/>
    <property type="match status" value="1"/>
</dbReference>
<dbReference type="Pfam" id="PF00076">
    <property type="entry name" value="RRM_1"/>
    <property type="match status" value="3"/>
</dbReference>
<dbReference type="SMART" id="SM00360">
    <property type="entry name" value="RRM"/>
    <property type="match status" value="3"/>
</dbReference>
<dbReference type="SUPFAM" id="SSF54928">
    <property type="entry name" value="RNA-binding domain, RBD"/>
    <property type="match status" value="3"/>
</dbReference>
<dbReference type="PROSITE" id="PS50102">
    <property type="entry name" value="RRM"/>
    <property type="match status" value="3"/>
</dbReference>